<feature type="chain" id="PRO_0000161354" description="UPF0213 protein YazA">
    <location>
        <begin position="1"/>
        <end position="99"/>
    </location>
</feature>
<feature type="domain" description="GIY-YIG" evidence="1">
    <location>
        <begin position="4"/>
        <end position="79"/>
    </location>
</feature>
<accession>O31414</accession>
<protein>
    <recommendedName>
        <fullName>UPF0213 protein YazA</fullName>
    </recommendedName>
</protein>
<gene>
    <name type="primary">yazA</name>
    <name type="ordered locus">BSU00350</name>
</gene>
<keyword id="KW-1185">Reference proteome</keyword>
<comment type="similarity">
    <text evidence="2">Belongs to the UPF0213 family.</text>
</comment>
<reference key="1">
    <citation type="journal article" date="1997" name="Nature">
        <title>The complete genome sequence of the Gram-positive bacterium Bacillus subtilis.</title>
        <authorList>
            <person name="Kunst F."/>
            <person name="Ogasawara N."/>
            <person name="Moszer I."/>
            <person name="Albertini A.M."/>
            <person name="Alloni G."/>
            <person name="Azevedo V."/>
            <person name="Bertero M.G."/>
            <person name="Bessieres P."/>
            <person name="Bolotin A."/>
            <person name="Borchert S."/>
            <person name="Borriss R."/>
            <person name="Boursier L."/>
            <person name="Brans A."/>
            <person name="Braun M."/>
            <person name="Brignell S.C."/>
            <person name="Bron S."/>
            <person name="Brouillet S."/>
            <person name="Bruschi C.V."/>
            <person name="Caldwell B."/>
            <person name="Capuano V."/>
            <person name="Carter N.M."/>
            <person name="Choi S.-K."/>
            <person name="Codani J.-J."/>
            <person name="Connerton I.F."/>
            <person name="Cummings N.J."/>
            <person name="Daniel R.A."/>
            <person name="Denizot F."/>
            <person name="Devine K.M."/>
            <person name="Duesterhoeft A."/>
            <person name="Ehrlich S.D."/>
            <person name="Emmerson P.T."/>
            <person name="Entian K.-D."/>
            <person name="Errington J."/>
            <person name="Fabret C."/>
            <person name="Ferrari E."/>
            <person name="Foulger D."/>
            <person name="Fritz C."/>
            <person name="Fujita M."/>
            <person name="Fujita Y."/>
            <person name="Fuma S."/>
            <person name="Galizzi A."/>
            <person name="Galleron N."/>
            <person name="Ghim S.-Y."/>
            <person name="Glaser P."/>
            <person name="Goffeau A."/>
            <person name="Golightly E.J."/>
            <person name="Grandi G."/>
            <person name="Guiseppi G."/>
            <person name="Guy B.J."/>
            <person name="Haga K."/>
            <person name="Haiech J."/>
            <person name="Harwood C.R."/>
            <person name="Henaut A."/>
            <person name="Hilbert H."/>
            <person name="Holsappel S."/>
            <person name="Hosono S."/>
            <person name="Hullo M.-F."/>
            <person name="Itaya M."/>
            <person name="Jones L.-M."/>
            <person name="Joris B."/>
            <person name="Karamata D."/>
            <person name="Kasahara Y."/>
            <person name="Klaerr-Blanchard M."/>
            <person name="Klein C."/>
            <person name="Kobayashi Y."/>
            <person name="Koetter P."/>
            <person name="Koningstein G."/>
            <person name="Krogh S."/>
            <person name="Kumano M."/>
            <person name="Kurita K."/>
            <person name="Lapidus A."/>
            <person name="Lardinois S."/>
            <person name="Lauber J."/>
            <person name="Lazarevic V."/>
            <person name="Lee S.-M."/>
            <person name="Levine A."/>
            <person name="Liu H."/>
            <person name="Masuda S."/>
            <person name="Mauel C."/>
            <person name="Medigue C."/>
            <person name="Medina N."/>
            <person name="Mellado R.P."/>
            <person name="Mizuno M."/>
            <person name="Moestl D."/>
            <person name="Nakai S."/>
            <person name="Noback M."/>
            <person name="Noone D."/>
            <person name="O'Reilly M."/>
            <person name="Ogawa K."/>
            <person name="Ogiwara A."/>
            <person name="Oudega B."/>
            <person name="Park S.-H."/>
            <person name="Parro V."/>
            <person name="Pohl T.M."/>
            <person name="Portetelle D."/>
            <person name="Porwollik S."/>
            <person name="Prescott A.M."/>
            <person name="Presecan E."/>
            <person name="Pujic P."/>
            <person name="Purnelle B."/>
            <person name="Rapoport G."/>
            <person name="Rey M."/>
            <person name="Reynolds S."/>
            <person name="Rieger M."/>
            <person name="Rivolta C."/>
            <person name="Rocha E."/>
            <person name="Roche B."/>
            <person name="Rose M."/>
            <person name="Sadaie Y."/>
            <person name="Sato T."/>
            <person name="Scanlan E."/>
            <person name="Schleich S."/>
            <person name="Schroeter R."/>
            <person name="Scoffone F."/>
            <person name="Sekiguchi J."/>
            <person name="Sekowska A."/>
            <person name="Seror S.J."/>
            <person name="Serror P."/>
            <person name="Shin B.-S."/>
            <person name="Soldo B."/>
            <person name="Sorokin A."/>
            <person name="Tacconi E."/>
            <person name="Takagi T."/>
            <person name="Takahashi H."/>
            <person name="Takemaru K."/>
            <person name="Takeuchi M."/>
            <person name="Tamakoshi A."/>
            <person name="Tanaka T."/>
            <person name="Terpstra P."/>
            <person name="Tognoni A."/>
            <person name="Tosato V."/>
            <person name="Uchiyama S."/>
            <person name="Vandenbol M."/>
            <person name="Vannier F."/>
            <person name="Vassarotti A."/>
            <person name="Viari A."/>
            <person name="Wambutt R."/>
            <person name="Wedler E."/>
            <person name="Wedler H."/>
            <person name="Weitzenegger T."/>
            <person name="Winters P."/>
            <person name="Wipat A."/>
            <person name="Yamamoto H."/>
            <person name="Yamane K."/>
            <person name="Yasumoto K."/>
            <person name="Yata K."/>
            <person name="Yoshida K."/>
            <person name="Yoshikawa H.-F."/>
            <person name="Zumstein E."/>
            <person name="Yoshikawa H."/>
            <person name="Danchin A."/>
        </authorList>
    </citation>
    <scope>NUCLEOTIDE SEQUENCE [LARGE SCALE GENOMIC DNA]</scope>
    <source>
        <strain>168</strain>
    </source>
</reference>
<sequence length="99" mass="11878">METNNHFFYVVKCKDNSWYAGYTNDLHKRVKTHNDGKGAKYTKVRRPVELIFAESFSTKREAMQAEYYFKKLTRKKKELYIEEKRNSKEAVYVKAPNEL</sequence>
<organism>
    <name type="scientific">Bacillus subtilis (strain 168)</name>
    <dbReference type="NCBI Taxonomy" id="224308"/>
    <lineage>
        <taxon>Bacteria</taxon>
        <taxon>Bacillati</taxon>
        <taxon>Bacillota</taxon>
        <taxon>Bacilli</taxon>
        <taxon>Bacillales</taxon>
        <taxon>Bacillaceae</taxon>
        <taxon>Bacillus</taxon>
    </lineage>
</organism>
<evidence type="ECO:0000255" key="1">
    <source>
        <dbReference type="PROSITE-ProRule" id="PRU00977"/>
    </source>
</evidence>
<evidence type="ECO:0000305" key="2"/>
<dbReference type="EMBL" id="AL009126">
    <property type="protein sequence ID" value="CAB11811.1"/>
    <property type="molecule type" value="Genomic_DNA"/>
</dbReference>
<dbReference type="PIR" id="A69742">
    <property type="entry name" value="A69742"/>
</dbReference>
<dbReference type="RefSeq" id="NP_387916.1">
    <property type="nucleotide sequence ID" value="NC_000964.3"/>
</dbReference>
<dbReference type="RefSeq" id="WP_003242983.1">
    <property type="nucleotide sequence ID" value="NZ_OZ025638.1"/>
</dbReference>
<dbReference type="SMR" id="O31414"/>
<dbReference type="FunCoup" id="O31414">
    <property type="interactions" value="103"/>
</dbReference>
<dbReference type="STRING" id="224308.BSU00350"/>
<dbReference type="PaxDb" id="224308-BSU00350"/>
<dbReference type="EnsemblBacteria" id="CAB11811">
    <property type="protein sequence ID" value="CAB11811"/>
    <property type="gene ID" value="BSU_00350"/>
</dbReference>
<dbReference type="GeneID" id="937002"/>
<dbReference type="KEGG" id="bsu:BSU00350"/>
<dbReference type="PATRIC" id="fig|224308.179.peg.35"/>
<dbReference type="eggNOG" id="COG2827">
    <property type="taxonomic scope" value="Bacteria"/>
</dbReference>
<dbReference type="InParanoid" id="O31414"/>
<dbReference type="OrthoDB" id="9807770at2"/>
<dbReference type="PhylomeDB" id="O31414"/>
<dbReference type="BioCyc" id="BSUB:BSU00350-MONOMER"/>
<dbReference type="Proteomes" id="UP000001570">
    <property type="component" value="Chromosome"/>
</dbReference>
<dbReference type="CDD" id="cd10456">
    <property type="entry name" value="GIY-YIG_UPF0213"/>
    <property type="match status" value="1"/>
</dbReference>
<dbReference type="Gene3D" id="3.40.1440.10">
    <property type="entry name" value="GIY-YIG endonuclease"/>
    <property type="match status" value="1"/>
</dbReference>
<dbReference type="InterPro" id="IPR000305">
    <property type="entry name" value="GIY-YIG_endonuc"/>
</dbReference>
<dbReference type="InterPro" id="IPR035901">
    <property type="entry name" value="GIY-YIG_endonuc_sf"/>
</dbReference>
<dbReference type="InterPro" id="IPR050190">
    <property type="entry name" value="UPF0213_domain"/>
</dbReference>
<dbReference type="PANTHER" id="PTHR34477">
    <property type="entry name" value="UPF0213 PROTEIN YHBQ"/>
    <property type="match status" value="1"/>
</dbReference>
<dbReference type="PANTHER" id="PTHR34477:SF1">
    <property type="entry name" value="UPF0213 PROTEIN YHBQ"/>
    <property type="match status" value="1"/>
</dbReference>
<dbReference type="Pfam" id="PF01541">
    <property type="entry name" value="GIY-YIG"/>
    <property type="match status" value="1"/>
</dbReference>
<dbReference type="SMART" id="SM00465">
    <property type="entry name" value="GIYc"/>
    <property type="match status" value="1"/>
</dbReference>
<dbReference type="SUPFAM" id="SSF82771">
    <property type="entry name" value="GIY-YIG endonuclease"/>
    <property type="match status" value="1"/>
</dbReference>
<dbReference type="PROSITE" id="PS50164">
    <property type="entry name" value="GIY_YIG"/>
    <property type="match status" value="1"/>
</dbReference>
<proteinExistence type="inferred from homology"/>
<name>YAZA_BACSU</name>